<organism>
    <name type="scientific">Staphylococcus haemolyticus (strain JCSC1435)</name>
    <dbReference type="NCBI Taxonomy" id="279808"/>
    <lineage>
        <taxon>Bacteria</taxon>
        <taxon>Bacillati</taxon>
        <taxon>Bacillota</taxon>
        <taxon>Bacilli</taxon>
        <taxon>Bacillales</taxon>
        <taxon>Staphylococcaceae</taxon>
        <taxon>Staphylococcus</taxon>
    </lineage>
</organism>
<evidence type="ECO:0000255" key="1">
    <source>
        <dbReference type="HAMAP-Rule" id="MF_02004"/>
    </source>
</evidence>
<feature type="chain" id="PRO_0000224568" description="Valine--tRNA ligase">
    <location>
        <begin position="1"/>
        <end position="876"/>
    </location>
</feature>
<feature type="coiled-coil region" evidence="1">
    <location>
        <begin position="805"/>
        <end position="876"/>
    </location>
</feature>
<feature type="short sequence motif" description="'HIGH' region">
    <location>
        <begin position="44"/>
        <end position="54"/>
    </location>
</feature>
<feature type="short sequence motif" description="'KMSKS' region">
    <location>
        <begin position="520"/>
        <end position="524"/>
    </location>
</feature>
<feature type="binding site" evidence="1">
    <location>
        <position position="523"/>
    </location>
    <ligand>
        <name>ATP</name>
        <dbReference type="ChEBI" id="CHEBI:30616"/>
    </ligand>
</feature>
<sequence length="876" mass="101959">MNMEPKYNPREVEAGRYEEWVKNDYFKPSEDKSKETYTIVIPPPNVTGKLHLGHAWDTTLQDIITRMKRMQGYDTLYLPGMDHAGIATQAKVDAKLKEQGISRHDIGREKFLEHAWSWKEEYASFIRQQWAKLGLGLDYSRERFTLDDGLSKAVRKVFVDLYNKGIIYRGERIINWDPEARTALSDIEVIHEDVQGHFYHFKYPYADGDGYIEIATTRPETMLGDTAIVVNPNDDRYKDVIGKKVILPIVGRELPILADEYVDIDFGSGAMKVTPAHDPNDFEIGQRHSLENIIVMDENGKMNDKADKYAGLDRFECRKQLVEDLKAQDLVIKIEEHVHSVGHSERSGAVVEPYLSTQWFVKMKPLAQRSLDNQKTDDRIDFYPPRFENTFNRWMEEIRDWTISRQLWWGHQIPAWYHKETGEIYVGEEAPKDIDNWVQDEDVLDTWFSSALWPFSTLGWPNIDADDFKRYYPTNALVTGYDIIFFWVARMIFQGLEFTDRRPFNDVLLHGLVRAEDGRKMSKSLGNGVDPMDVIEEYGADSLRYFLATGSSPGHDLRYSTEKVESVWNFINKIWNGARFSLMNIGDEFKFEDIDLTGNLSLADKWILTRLNETIETVTNLSEKYEFGEVGRALYNFIWDEFCDWYIEMSKIPMNGEDEAQKQTTRSVLSYTLDQIMRMLHPFMPFVTEKIWQSLPHEGETIVKASWPTVREELVFEESKQTMQQLVEIIKSVRQSRVEVNTPLSKAIPIYIQAKDENIKATLIENEDYIHKFCNPSDLTIDTHIDIPEKAMTAVVIAGKVVLPLEGLIDMDKEIARLEKELDKLQKELDRVDKKLSNENFVNKAPEKVINEEKEKQQRYQEKYDGVKNRIEQLKA</sequence>
<protein>
    <recommendedName>
        <fullName evidence="1">Valine--tRNA ligase</fullName>
        <ecNumber evidence="1">6.1.1.9</ecNumber>
    </recommendedName>
    <alternativeName>
        <fullName evidence="1">Valyl-tRNA synthetase</fullName>
        <shortName evidence="1">ValRS</shortName>
    </alternativeName>
</protein>
<dbReference type="EC" id="6.1.1.9" evidence="1"/>
<dbReference type="EMBL" id="AP006716">
    <property type="protein sequence ID" value="BAE04572.1"/>
    <property type="molecule type" value="Genomic_DNA"/>
</dbReference>
<dbReference type="RefSeq" id="WP_011275561.1">
    <property type="nucleotide sequence ID" value="NC_007168.1"/>
</dbReference>
<dbReference type="SMR" id="Q4L703"/>
<dbReference type="KEGG" id="sha:SH1263"/>
<dbReference type="eggNOG" id="COG0525">
    <property type="taxonomic scope" value="Bacteria"/>
</dbReference>
<dbReference type="HOGENOM" id="CLU_001493_0_2_9"/>
<dbReference type="OrthoDB" id="9810365at2"/>
<dbReference type="Proteomes" id="UP000000543">
    <property type="component" value="Chromosome"/>
</dbReference>
<dbReference type="GO" id="GO:0005829">
    <property type="term" value="C:cytosol"/>
    <property type="evidence" value="ECO:0007669"/>
    <property type="project" value="TreeGrafter"/>
</dbReference>
<dbReference type="GO" id="GO:0002161">
    <property type="term" value="F:aminoacyl-tRNA deacylase activity"/>
    <property type="evidence" value="ECO:0007669"/>
    <property type="project" value="InterPro"/>
</dbReference>
<dbReference type="GO" id="GO:0005524">
    <property type="term" value="F:ATP binding"/>
    <property type="evidence" value="ECO:0007669"/>
    <property type="project" value="UniProtKB-UniRule"/>
</dbReference>
<dbReference type="GO" id="GO:0004832">
    <property type="term" value="F:valine-tRNA ligase activity"/>
    <property type="evidence" value="ECO:0007669"/>
    <property type="project" value="UniProtKB-UniRule"/>
</dbReference>
<dbReference type="GO" id="GO:0006438">
    <property type="term" value="P:valyl-tRNA aminoacylation"/>
    <property type="evidence" value="ECO:0007669"/>
    <property type="project" value="UniProtKB-UniRule"/>
</dbReference>
<dbReference type="CDD" id="cd07962">
    <property type="entry name" value="Anticodon_Ia_Val"/>
    <property type="match status" value="1"/>
</dbReference>
<dbReference type="CDD" id="cd00817">
    <property type="entry name" value="ValRS_core"/>
    <property type="match status" value="1"/>
</dbReference>
<dbReference type="FunFam" id="1.10.287.380:FF:000001">
    <property type="entry name" value="Valine--tRNA ligase"/>
    <property type="match status" value="1"/>
</dbReference>
<dbReference type="FunFam" id="1.10.730.10:FF:000014">
    <property type="entry name" value="Valine--tRNA ligase"/>
    <property type="match status" value="1"/>
</dbReference>
<dbReference type="FunFam" id="3.40.50.620:FF:000032">
    <property type="entry name" value="Valine--tRNA ligase"/>
    <property type="match status" value="1"/>
</dbReference>
<dbReference type="FunFam" id="3.40.50.620:FF:000098">
    <property type="entry name" value="Valine--tRNA ligase"/>
    <property type="match status" value="1"/>
</dbReference>
<dbReference type="FunFam" id="3.90.740.10:FF:000005">
    <property type="entry name" value="Valine--tRNA ligase, mitochondrial"/>
    <property type="match status" value="1"/>
</dbReference>
<dbReference type="Gene3D" id="3.40.50.620">
    <property type="entry name" value="HUPs"/>
    <property type="match status" value="2"/>
</dbReference>
<dbReference type="Gene3D" id="1.10.730.10">
    <property type="entry name" value="Isoleucyl-tRNA Synthetase, Domain 1"/>
    <property type="match status" value="1"/>
</dbReference>
<dbReference type="Gene3D" id="1.10.287.380">
    <property type="entry name" value="Valyl-tRNA synthetase, C-terminal domain"/>
    <property type="match status" value="1"/>
</dbReference>
<dbReference type="Gene3D" id="3.90.740.10">
    <property type="entry name" value="Valyl/Leucyl/Isoleucyl-tRNA synthetase, editing domain"/>
    <property type="match status" value="1"/>
</dbReference>
<dbReference type="HAMAP" id="MF_02004">
    <property type="entry name" value="Val_tRNA_synth_type1"/>
    <property type="match status" value="1"/>
</dbReference>
<dbReference type="InterPro" id="IPR001412">
    <property type="entry name" value="aa-tRNA-synth_I_CS"/>
</dbReference>
<dbReference type="InterPro" id="IPR002300">
    <property type="entry name" value="aa-tRNA-synth_Ia"/>
</dbReference>
<dbReference type="InterPro" id="IPR033705">
    <property type="entry name" value="Anticodon_Ia_Val"/>
</dbReference>
<dbReference type="InterPro" id="IPR013155">
    <property type="entry name" value="M/V/L/I-tRNA-synth_anticd-bd"/>
</dbReference>
<dbReference type="InterPro" id="IPR014729">
    <property type="entry name" value="Rossmann-like_a/b/a_fold"/>
</dbReference>
<dbReference type="InterPro" id="IPR010978">
    <property type="entry name" value="tRNA-bd_arm"/>
</dbReference>
<dbReference type="InterPro" id="IPR009080">
    <property type="entry name" value="tRNAsynth_Ia_anticodon-bd"/>
</dbReference>
<dbReference type="InterPro" id="IPR037118">
    <property type="entry name" value="Val-tRNA_synth_C_sf"/>
</dbReference>
<dbReference type="InterPro" id="IPR019499">
    <property type="entry name" value="Val-tRNA_synth_tRNA-bd"/>
</dbReference>
<dbReference type="InterPro" id="IPR009008">
    <property type="entry name" value="Val/Leu/Ile-tRNA-synth_edit"/>
</dbReference>
<dbReference type="InterPro" id="IPR002303">
    <property type="entry name" value="Valyl-tRNA_ligase"/>
</dbReference>
<dbReference type="NCBIfam" id="NF004349">
    <property type="entry name" value="PRK05729.1"/>
    <property type="match status" value="1"/>
</dbReference>
<dbReference type="NCBIfam" id="TIGR00422">
    <property type="entry name" value="valS"/>
    <property type="match status" value="1"/>
</dbReference>
<dbReference type="PANTHER" id="PTHR11946:SF93">
    <property type="entry name" value="VALINE--TRNA LIGASE, CHLOROPLASTIC_MITOCHONDRIAL 2"/>
    <property type="match status" value="1"/>
</dbReference>
<dbReference type="PANTHER" id="PTHR11946">
    <property type="entry name" value="VALYL-TRNA SYNTHETASES"/>
    <property type="match status" value="1"/>
</dbReference>
<dbReference type="Pfam" id="PF08264">
    <property type="entry name" value="Anticodon_1"/>
    <property type="match status" value="1"/>
</dbReference>
<dbReference type="Pfam" id="PF00133">
    <property type="entry name" value="tRNA-synt_1"/>
    <property type="match status" value="2"/>
</dbReference>
<dbReference type="Pfam" id="PF10458">
    <property type="entry name" value="Val_tRNA-synt_C"/>
    <property type="match status" value="1"/>
</dbReference>
<dbReference type="PRINTS" id="PR00986">
    <property type="entry name" value="TRNASYNTHVAL"/>
</dbReference>
<dbReference type="SUPFAM" id="SSF47323">
    <property type="entry name" value="Anticodon-binding domain of a subclass of class I aminoacyl-tRNA synthetases"/>
    <property type="match status" value="1"/>
</dbReference>
<dbReference type="SUPFAM" id="SSF52374">
    <property type="entry name" value="Nucleotidylyl transferase"/>
    <property type="match status" value="1"/>
</dbReference>
<dbReference type="SUPFAM" id="SSF46589">
    <property type="entry name" value="tRNA-binding arm"/>
    <property type="match status" value="1"/>
</dbReference>
<dbReference type="SUPFAM" id="SSF50677">
    <property type="entry name" value="ValRS/IleRS/LeuRS editing domain"/>
    <property type="match status" value="1"/>
</dbReference>
<dbReference type="PROSITE" id="PS00178">
    <property type="entry name" value="AA_TRNA_LIGASE_I"/>
    <property type="match status" value="1"/>
</dbReference>
<gene>
    <name evidence="1" type="primary">valS</name>
    <name type="ordered locus">SH1263</name>
</gene>
<reference key="1">
    <citation type="journal article" date="2005" name="J. Bacteriol.">
        <title>Whole-genome sequencing of Staphylococcus haemolyticus uncovers the extreme plasticity of its genome and the evolution of human-colonizing staphylococcal species.</title>
        <authorList>
            <person name="Takeuchi F."/>
            <person name="Watanabe S."/>
            <person name="Baba T."/>
            <person name="Yuzawa H."/>
            <person name="Ito T."/>
            <person name="Morimoto Y."/>
            <person name="Kuroda M."/>
            <person name="Cui L."/>
            <person name="Takahashi M."/>
            <person name="Ankai A."/>
            <person name="Baba S."/>
            <person name="Fukui S."/>
            <person name="Lee J.C."/>
            <person name="Hiramatsu K."/>
        </authorList>
    </citation>
    <scope>NUCLEOTIDE SEQUENCE [LARGE SCALE GENOMIC DNA]</scope>
    <source>
        <strain>JCSC1435</strain>
    </source>
</reference>
<proteinExistence type="inferred from homology"/>
<name>SYV_STAHJ</name>
<comment type="function">
    <text evidence="1">Catalyzes the attachment of valine to tRNA(Val). As ValRS can inadvertently accommodate and process structurally similar amino acids such as threonine, to avoid such errors, it has a 'posttransfer' editing activity that hydrolyzes mischarged Thr-tRNA(Val) in a tRNA-dependent manner.</text>
</comment>
<comment type="catalytic activity">
    <reaction evidence="1">
        <text>tRNA(Val) + L-valine + ATP = L-valyl-tRNA(Val) + AMP + diphosphate</text>
        <dbReference type="Rhea" id="RHEA:10704"/>
        <dbReference type="Rhea" id="RHEA-COMP:9672"/>
        <dbReference type="Rhea" id="RHEA-COMP:9708"/>
        <dbReference type="ChEBI" id="CHEBI:30616"/>
        <dbReference type="ChEBI" id="CHEBI:33019"/>
        <dbReference type="ChEBI" id="CHEBI:57762"/>
        <dbReference type="ChEBI" id="CHEBI:78442"/>
        <dbReference type="ChEBI" id="CHEBI:78537"/>
        <dbReference type="ChEBI" id="CHEBI:456215"/>
        <dbReference type="EC" id="6.1.1.9"/>
    </reaction>
</comment>
<comment type="subunit">
    <text evidence="1">Monomer.</text>
</comment>
<comment type="subcellular location">
    <subcellularLocation>
        <location evidence="1">Cytoplasm</location>
    </subcellularLocation>
</comment>
<comment type="domain">
    <text evidence="1">ValRS has two distinct active sites: one for aminoacylation and one for editing. The misactivated threonine is translocated from the active site to the editing site.</text>
</comment>
<comment type="domain">
    <text evidence="1">The C-terminal coiled-coil domain is crucial for aminoacylation activity.</text>
</comment>
<comment type="similarity">
    <text evidence="1">Belongs to the class-I aminoacyl-tRNA synthetase family. ValS type 1 subfamily.</text>
</comment>
<accession>Q4L703</accession>
<keyword id="KW-0030">Aminoacyl-tRNA synthetase</keyword>
<keyword id="KW-0067">ATP-binding</keyword>
<keyword id="KW-0175">Coiled coil</keyword>
<keyword id="KW-0963">Cytoplasm</keyword>
<keyword id="KW-0436">Ligase</keyword>
<keyword id="KW-0547">Nucleotide-binding</keyword>
<keyword id="KW-0648">Protein biosynthesis</keyword>